<accession>Q9GZQ6</accession>
<accession>A2RRF0</accession>
<accession>Q8NGR0</accession>
<accession>Q96RN3</accession>
<reference key="1">
    <citation type="journal article" date="2000" name="J. Biol. Chem.">
        <title>Identification and characterization of two G protein-coupled receptors for neuropeptide FF.</title>
        <authorList>
            <person name="Bonini J.A."/>
            <person name="Jones K.A."/>
            <person name="Adham N."/>
            <person name="Forray C."/>
            <person name="Artymyshyn R."/>
            <person name="Durkin M.M."/>
            <person name="Smith K.E."/>
            <person name="Tamm J.A."/>
            <person name="Boteju L.W."/>
            <person name="Lakhlani P.P."/>
            <person name="Raddatz R."/>
            <person name="Yao W.-J."/>
            <person name="Ogozalek K.L."/>
            <person name="Boyle N."/>
            <person name="Kouranova E.V."/>
            <person name="Quan Y."/>
            <person name="Vaysse P.J."/>
            <person name="Wetzel J.M."/>
            <person name="Branchek T.A."/>
            <person name="Gerald C."/>
            <person name="Borowsky B."/>
        </authorList>
    </citation>
    <scope>NUCLEOTIDE SEQUENCE [MRNA]</scope>
    <scope>FUNCTION</scope>
    <scope>SUBCELLULAR LOCATION</scope>
    <source>
        <tissue>Spinal cord</tissue>
    </source>
</reference>
<reference key="2">
    <citation type="journal article" date="2000" name="Nat. Cell Biol.">
        <title>New neuropeptides containing carboxy-terminal RFamide and their receptor in mammals.</title>
        <authorList>
            <person name="Hinuma S."/>
            <person name="Shintani Y."/>
            <person name="Fukusumi S."/>
            <person name="Iijima N."/>
            <person name="Matsumoto Y."/>
            <person name="Hosoya M."/>
            <person name="Fujii R."/>
            <person name="Watanabe T."/>
            <person name="Kikuchi K."/>
            <person name="Terao Y."/>
            <person name="Yano T."/>
            <person name="Yamamoto T."/>
            <person name="Kawamata Y."/>
            <person name="Habata Y."/>
            <person name="Asada M."/>
            <person name="Kitada C."/>
            <person name="Kurokawa T."/>
            <person name="Onda H."/>
            <person name="Nishimura O."/>
            <person name="Tanaka M."/>
            <person name="Ibata Y."/>
            <person name="Fujino M."/>
        </authorList>
    </citation>
    <scope>NUCLEOTIDE SEQUENCE [MRNA]</scope>
    <scope>FUNCTION</scope>
</reference>
<reference key="3">
    <citation type="submission" date="2000-12" db="EMBL/GenBank/DDBJ databases">
        <title>Identification and characterization of two cognate receptors for mammalian FMRFamide-like neuropeptides.</title>
        <authorList>
            <person name="Liu Q."/>
            <person name="Guan X.-M."/>
            <person name="McDonald T.P."/>
            <person name="Jiang Q."/>
            <person name="Zeng Z."/>
            <person name="Marlene J."/>
            <person name="Williams D.L. Jr."/>
            <person name="Hong Y."/>
            <person name="Figueroa D."/>
            <person name="Clements M.K."/>
            <person name="Mallee J."/>
            <person name="Wang R."/>
            <person name="Evans J."/>
            <person name="Gould R."/>
            <person name="Austin C.P."/>
        </authorList>
    </citation>
    <scope>NUCLEOTIDE SEQUENCE [GENOMIC DNA]</scope>
</reference>
<reference key="4">
    <citation type="submission" date="2001-07" db="EMBL/GenBank/DDBJ databases">
        <title>Genome-wide discovery and analysis of human seven transmembrane helix receptor genes.</title>
        <authorList>
            <person name="Suwa M."/>
            <person name="Sato T."/>
            <person name="Okouchi I."/>
            <person name="Arita M."/>
            <person name="Futami K."/>
            <person name="Matsumoto S."/>
            <person name="Tsutsumi S."/>
            <person name="Aburatani H."/>
            <person name="Asai K."/>
            <person name="Akiyama Y."/>
        </authorList>
    </citation>
    <scope>NUCLEOTIDE SEQUENCE [GENOMIC DNA]</scope>
</reference>
<reference key="5">
    <citation type="submission" date="2007-12" db="EMBL/GenBank/DDBJ databases">
        <authorList>
            <person name="Kaighin V.A."/>
            <person name="Martin A.L."/>
            <person name="Aronstam R.S."/>
        </authorList>
    </citation>
    <scope>NUCLEOTIDE SEQUENCE [MRNA]</scope>
    <source>
        <tissue>Spinal cord</tissue>
    </source>
</reference>
<reference key="6">
    <citation type="journal article" date="2004" name="Genome Res.">
        <title>The status, quality, and expansion of the NIH full-length cDNA project: the Mammalian Gene Collection (MGC).</title>
        <authorList>
            <consortium name="The MGC Project Team"/>
        </authorList>
    </citation>
    <scope>NUCLEOTIDE SEQUENCE [LARGE SCALE MRNA]</scope>
</reference>
<dbReference type="EMBL" id="AF268898">
    <property type="protein sequence ID" value="AAG41397.1"/>
    <property type="molecule type" value="mRNA"/>
</dbReference>
<dbReference type="EMBL" id="AB040104">
    <property type="protein sequence ID" value="BAB17677.1"/>
    <property type="molecule type" value="mRNA"/>
</dbReference>
<dbReference type="EMBL" id="AF330055">
    <property type="protein sequence ID" value="AAK94199.1"/>
    <property type="molecule type" value="mRNA"/>
</dbReference>
<dbReference type="EMBL" id="AB065729">
    <property type="protein sequence ID" value="BAC05950.1"/>
    <property type="status" value="ALT_SEQ"/>
    <property type="molecule type" value="Genomic_DNA"/>
</dbReference>
<dbReference type="EMBL" id="EU432128">
    <property type="protein sequence ID" value="ABY87927.1"/>
    <property type="molecule type" value="mRNA"/>
</dbReference>
<dbReference type="EMBL" id="BC131580">
    <property type="protein sequence ID" value="AAI31581.1"/>
    <property type="molecule type" value="mRNA"/>
</dbReference>
<dbReference type="CCDS" id="CCDS53539.1"/>
<dbReference type="RefSeq" id="NP_071429.1">
    <property type="nucleotide sequence ID" value="NM_022146.5"/>
</dbReference>
<dbReference type="SMR" id="Q9GZQ6"/>
<dbReference type="BioGRID" id="122064">
    <property type="interactions" value="2"/>
</dbReference>
<dbReference type="CORUM" id="Q9GZQ6"/>
<dbReference type="FunCoup" id="Q9GZQ6">
    <property type="interactions" value="561"/>
</dbReference>
<dbReference type="IntAct" id="Q9GZQ6">
    <property type="interactions" value="3"/>
</dbReference>
<dbReference type="STRING" id="9606.ENSP00000277942"/>
<dbReference type="BindingDB" id="Q9GZQ6"/>
<dbReference type="ChEMBL" id="CHEMBL5951"/>
<dbReference type="GuidetoPHARMACOLOGY" id="300"/>
<dbReference type="GlyCosmos" id="Q9GZQ6">
    <property type="glycosylation" value="5 sites, No reported glycans"/>
</dbReference>
<dbReference type="GlyGen" id="Q9GZQ6">
    <property type="glycosylation" value="6 sites"/>
</dbReference>
<dbReference type="iPTMnet" id="Q9GZQ6"/>
<dbReference type="PhosphoSitePlus" id="Q9GZQ6"/>
<dbReference type="BioMuta" id="NPFFR1"/>
<dbReference type="DMDM" id="13878599"/>
<dbReference type="PaxDb" id="9606-ENSP00000277942"/>
<dbReference type="Antibodypedia" id="7444">
    <property type="antibodies" value="179 antibodies from 30 providers"/>
</dbReference>
<dbReference type="DNASU" id="64106"/>
<dbReference type="Ensembl" id="ENST00000277942.7">
    <property type="protein sequence ID" value="ENSP00000277942.5"/>
    <property type="gene ID" value="ENSG00000148734.8"/>
</dbReference>
<dbReference type="GeneID" id="64106"/>
<dbReference type="KEGG" id="hsa:64106"/>
<dbReference type="MANE-Select" id="ENST00000277942.7">
    <property type="protein sequence ID" value="ENSP00000277942.5"/>
    <property type="RefSeq nucleotide sequence ID" value="NM_022146.5"/>
    <property type="RefSeq protein sequence ID" value="NP_071429.1"/>
</dbReference>
<dbReference type="UCSC" id="uc021psj.2">
    <property type="organism name" value="human"/>
</dbReference>
<dbReference type="AGR" id="HGNC:17425"/>
<dbReference type="CTD" id="64106"/>
<dbReference type="DisGeNET" id="64106"/>
<dbReference type="GeneCards" id="NPFFR1"/>
<dbReference type="HGNC" id="HGNC:17425">
    <property type="gene designation" value="NPFFR1"/>
</dbReference>
<dbReference type="HPA" id="ENSG00000148734">
    <property type="expression patterns" value="Group enriched (brain, retina)"/>
</dbReference>
<dbReference type="MIM" id="607448">
    <property type="type" value="gene"/>
</dbReference>
<dbReference type="neXtProt" id="NX_Q9GZQ6"/>
<dbReference type="OpenTargets" id="ENSG00000148734"/>
<dbReference type="PharmGKB" id="PA134934991"/>
<dbReference type="VEuPathDB" id="HostDB:ENSG00000148734"/>
<dbReference type="eggNOG" id="KOG3656">
    <property type="taxonomic scope" value="Eukaryota"/>
</dbReference>
<dbReference type="GeneTree" id="ENSGT01130000278294"/>
<dbReference type="HOGENOM" id="CLU_009579_6_1_1"/>
<dbReference type="InParanoid" id="Q9GZQ6"/>
<dbReference type="OMA" id="WGSHREA"/>
<dbReference type="OrthoDB" id="5975505at2759"/>
<dbReference type="PAN-GO" id="Q9GZQ6">
    <property type="GO annotations" value="4 GO annotations based on evolutionary models"/>
</dbReference>
<dbReference type="PhylomeDB" id="Q9GZQ6"/>
<dbReference type="TreeFam" id="TF315303"/>
<dbReference type="PathwayCommons" id="Q9GZQ6"/>
<dbReference type="Reactome" id="R-HSA-389397">
    <property type="pathway name" value="Orexin and neuropeptides FF and QRFP bind to their respective receptors"/>
</dbReference>
<dbReference type="Reactome" id="R-HSA-416476">
    <property type="pathway name" value="G alpha (q) signalling events"/>
</dbReference>
<dbReference type="SignaLink" id="Q9GZQ6"/>
<dbReference type="SIGNOR" id="Q9GZQ6"/>
<dbReference type="BioGRID-ORCS" id="64106">
    <property type="hits" value="9 hits in 1141 CRISPR screens"/>
</dbReference>
<dbReference type="ChiTaRS" id="NPFFR1">
    <property type="organism name" value="human"/>
</dbReference>
<dbReference type="GeneWiki" id="Neuropeptide_FF_receptor_1"/>
<dbReference type="GenomeRNAi" id="64106"/>
<dbReference type="Pharos" id="Q9GZQ6">
    <property type="development level" value="Tchem"/>
</dbReference>
<dbReference type="PRO" id="PR:Q9GZQ6"/>
<dbReference type="Proteomes" id="UP000005640">
    <property type="component" value="Chromosome 10"/>
</dbReference>
<dbReference type="RNAct" id="Q9GZQ6">
    <property type="molecule type" value="protein"/>
</dbReference>
<dbReference type="Bgee" id="ENSG00000148734">
    <property type="expression patterns" value="Expressed in dorsal motor nucleus of vagus nerve and 80 other cell types or tissues"/>
</dbReference>
<dbReference type="GO" id="GO:0005929">
    <property type="term" value="C:cilium"/>
    <property type="evidence" value="ECO:0000314"/>
    <property type="project" value="MGI"/>
</dbReference>
<dbReference type="GO" id="GO:0005886">
    <property type="term" value="C:plasma membrane"/>
    <property type="evidence" value="ECO:0000314"/>
    <property type="project" value="UniProt"/>
</dbReference>
<dbReference type="GO" id="GO:0004930">
    <property type="term" value="F:G protein-coupled receptor activity"/>
    <property type="evidence" value="ECO:0000318"/>
    <property type="project" value="GO_Central"/>
</dbReference>
<dbReference type="GO" id="GO:0008188">
    <property type="term" value="F:neuropeptide receptor activity"/>
    <property type="evidence" value="ECO:0000314"/>
    <property type="project" value="UniProt"/>
</dbReference>
<dbReference type="GO" id="GO:0032870">
    <property type="term" value="P:cellular response to hormone stimulus"/>
    <property type="evidence" value="ECO:0000318"/>
    <property type="project" value="GO_Central"/>
</dbReference>
<dbReference type="GO" id="GO:0007186">
    <property type="term" value="P:G protein-coupled receptor signaling pathway"/>
    <property type="evidence" value="ECO:0000318"/>
    <property type="project" value="GO_Central"/>
</dbReference>
<dbReference type="GO" id="GO:0007218">
    <property type="term" value="P:neuropeptide signaling pathway"/>
    <property type="evidence" value="ECO:0000314"/>
    <property type="project" value="UniProt"/>
</dbReference>
<dbReference type="FunFam" id="1.20.1070.10:FF:000153">
    <property type="entry name" value="Neuropeptide FF receptor 1"/>
    <property type="match status" value="1"/>
</dbReference>
<dbReference type="Gene3D" id="1.20.1070.10">
    <property type="entry name" value="Rhodopsin 7-helix transmembrane proteins"/>
    <property type="match status" value="1"/>
</dbReference>
<dbReference type="InterPro" id="IPR000276">
    <property type="entry name" value="GPCR_Rhodpsn"/>
</dbReference>
<dbReference type="InterPro" id="IPR017452">
    <property type="entry name" value="GPCR_Rhodpsn_7TM"/>
</dbReference>
<dbReference type="InterPro" id="IPR005395">
    <property type="entry name" value="NPFF_rcpt"/>
</dbReference>
<dbReference type="InterPro" id="IPR005396">
    <property type="entry name" value="NPFF_rcpt_1"/>
</dbReference>
<dbReference type="PANTHER" id="PTHR24241:SF4">
    <property type="entry name" value="NEUROPEPTIDE FF RECEPTOR 1"/>
    <property type="match status" value="1"/>
</dbReference>
<dbReference type="PANTHER" id="PTHR24241">
    <property type="entry name" value="NEUROPEPTIDE RECEPTOR-RELATED G-PROTEIN COUPLED RECEPTOR"/>
    <property type="match status" value="1"/>
</dbReference>
<dbReference type="Pfam" id="PF00001">
    <property type="entry name" value="7tm_1"/>
    <property type="match status" value="1"/>
</dbReference>
<dbReference type="PRINTS" id="PR00237">
    <property type="entry name" value="GPCRRHODOPSN"/>
</dbReference>
<dbReference type="PRINTS" id="PR01570">
    <property type="entry name" value="NPFFRECEPTOR"/>
</dbReference>
<dbReference type="PRINTS" id="PR01571">
    <property type="entry name" value="NPFFRECEPTR1"/>
</dbReference>
<dbReference type="SMART" id="SM01381">
    <property type="entry name" value="7TM_GPCR_Srsx"/>
    <property type="match status" value="1"/>
</dbReference>
<dbReference type="SUPFAM" id="SSF81321">
    <property type="entry name" value="Family A G protein-coupled receptor-like"/>
    <property type="match status" value="1"/>
</dbReference>
<dbReference type="PROSITE" id="PS00237">
    <property type="entry name" value="G_PROTEIN_RECEP_F1_1"/>
    <property type="match status" value="1"/>
</dbReference>
<dbReference type="PROSITE" id="PS50262">
    <property type="entry name" value="G_PROTEIN_RECEP_F1_2"/>
    <property type="match status" value="1"/>
</dbReference>
<feature type="chain" id="PRO_0000069913" description="Neuropeptide FF receptor 1">
    <location>
        <begin position="1"/>
        <end position="430"/>
    </location>
</feature>
<feature type="topological domain" description="Extracellular" evidence="1">
    <location>
        <begin position="1"/>
        <end position="43"/>
    </location>
</feature>
<feature type="transmembrane region" description="Helical; Name=1" evidence="1">
    <location>
        <begin position="44"/>
        <end position="64"/>
    </location>
</feature>
<feature type="topological domain" description="Cytoplasmic" evidence="1">
    <location>
        <begin position="65"/>
        <end position="80"/>
    </location>
</feature>
<feature type="transmembrane region" description="Helical; Name=2" evidence="1">
    <location>
        <begin position="81"/>
        <end position="101"/>
    </location>
</feature>
<feature type="topological domain" description="Extracellular" evidence="1">
    <location>
        <begin position="102"/>
        <end position="117"/>
    </location>
</feature>
<feature type="transmembrane region" description="Helical; Name=3" evidence="1">
    <location>
        <begin position="118"/>
        <end position="138"/>
    </location>
</feature>
<feature type="topological domain" description="Cytoplasmic" evidence="1">
    <location>
        <begin position="139"/>
        <end position="158"/>
    </location>
</feature>
<feature type="transmembrane region" description="Helical; Name=4" evidence="1">
    <location>
        <begin position="159"/>
        <end position="179"/>
    </location>
</feature>
<feature type="topological domain" description="Extracellular" evidence="1">
    <location>
        <begin position="180"/>
        <end position="214"/>
    </location>
</feature>
<feature type="transmembrane region" description="Helical; Name=5" evidence="1">
    <location>
        <begin position="215"/>
        <end position="235"/>
    </location>
</feature>
<feature type="topological domain" description="Cytoplasmic" evidence="1">
    <location>
        <begin position="236"/>
        <end position="271"/>
    </location>
</feature>
<feature type="transmembrane region" description="Helical; Name=6" evidence="1">
    <location>
        <begin position="272"/>
        <end position="292"/>
    </location>
</feature>
<feature type="topological domain" description="Extracellular" evidence="1">
    <location>
        <begin position="293"/>
        <end position="307"/>
    </location>
</feature>
<feature type="transmembrane region" description="Helical; Name=7" evidence="1">
    <location>
        <begin position="308"/>
        <end position="328"/>
    </location>
</feature>
<feature type="topological domain" description="Cytoplasmic" evidence="1">
    <location>
        <begin position="329"/>
        <end position="430"/>
    </location>
</feature>
<feature type="region of interest" description="Disordered" evidence="3">
    <location>
        <begin position="1"/>
        <end position="20"/>
    </location>
</feature>
<feature type="region of interest" description="Disordered" evidence="3">
    <location>
        <begin position="379"/>
        <end position="413"/>
    </location>
</feature>
<feature type="compositionally biased region" description="Polar residues" evidence="3">
    <location>
        <begin position="9"/>
        <end position="20"/>
    </location>
</feature>
<feature type="compositionally biased region" description="Low complexity" evidence="3">
    <location>
        <begin position="379"/>
        <end position="404"/>
    </location>
</feature>
<feature type="glycosylation site" description="N-linked (GlcNAc...) asparagine" evidence="1">
    <location>
        <position position="10"/>
    </location>
</feature>
<feature type="glycosylation site" description="N-linked (GlcNAc...) asparagine" evidence="1">
    <location>
        <position position="18"/>
    </location>
</feature>
<feature type="glycosylation site" description="N-linked (GlcNAc...) asparagine" evidence="1">
    <location>
        <position position="29"/>
    </location>
</feature>
<feature type="glycosylation site" description="N-linked (GlcNAc...) asparagine" evidence="1">
    <location>
        <position position="113"/>
    </location>
</feature>
<feature type="glycosylation site" description="N-linked (GlcNAc...) asparagine" evidence="1">
    <location>
        <position position="195"/>
    </location>
</feature>
<feature type="disulfide bond" evidence="2">
    <location>
        <begin position="116"/>
        <end position="203"/>
    </location>
</feature>
<feature type="sequence variant" id="VAR_059327" description="In dbSNP:rs3812694.">
    <original>I</original>
    <variation>L</variation>
    <location>
        <position position="145"/>
    </location>
</feature>
<feature type="sequence conflict" description="In Ref. 3; AAK94199." evidence="6" ref="3">
    <original>V</original>
    <variation>A</variation>
    <location>
        <position position="376"/>
    </location>
</feature>
<keyword id="KW-1003">Cell membrane</keyword>
<keyword id="KW-1015">Disulfide bond</keyword>
<keyword id="KW-0297">G-protein coupled receptor</keyword>
<keyword id="KW-0325">Glycoprotein</keyword>
<keyword id="KW-0472">Membrane</keyword>
<keyword id="KW-0675">Receptor</keyword>
<keyword id="KW-1185">Reference proteome</keyword>
<keyword id="KW-0807">Transducer</keyword>
<keyword id="KW-0812">Transmembrane</keyword>
<keyword id="KW-1133">Transmembrane helix</keyword>
<comment type="function">
    <text evidence="4 5">Receptor for NPAF (A-18-F-amide) and NPFF (F-8-F-amide) neuropeptides, also known as morphine-modulating peptides. Can also be activated by a variety of naturally occurring or synthetic FMRF-amide like ligands. This receptor mediates its action by association with G proteins that activate a phosphatidylinositol-calcium second messenger system.</text>
</comment>
<comment type="interaction">
    <interactant intactId="EBI-18212103">
        <id>Q9GZQ6</id>
    </interactant>
    <interactant intactId="EBI-948169">
        <id>P13637</id>
        <label>ATP1A3</label>
    </interactant>
    <organismsDiffer>false</organismsDiffer>
    <experiments>3</experiments>
</comment>
<comment type="interaction">
    <interactant intactId="EBI-18212103">
        <id>Q9GZQ6</id>
    </interactant>
    <interactant intactId="EBI-716404">
        <id>P16284</id>
        <label>PECAM1</label>
    </interactant>
    <organismsDiffer>false</organismsDiffer>
    <experiments>3</experiments>
</comment>
<comment type="interaction">
    <interactant intactId="EBI-18212103">
        <id>Q9GZQ6</id>
    </interactant>
    <interactant intactId="EBI-17721485">
        <id>Q8WWU5-7</id>
        <label>TCP11</label>
    </interactant>
    <organismsDiffer>false</organismsDiffer>
    <experiments>3</experiments>
</comment>
<comment type="subcellular location">
    <subcellularLocation>
        <location evidence="4">Cell membrane</location>
        <topology evidence="1">Multi-pass membrane protein</topology>
    </subcellularLocation>
</comment>
<comment type="similarity">
    <text evidence="2">Belongs to the G-protein coupled receptor 1 family.</text>
</comment>
<comment type="sequence caution" evidence="6">
    <conflict type="erroneous gene model prediction">
        <sequence resource="EMBL-CDS" id="BAC05950"/>
    </conflict>
</comment>
<sequence length="430" mass="47819">MEGEPSQPPNSSWPLSQNGTNTEATPATNLTFSSYYQHTSPVAAMFIVAYALIFLLCMVGNTLVCFIVLKNRHMHTVTNMFILNLAVSDLLVGIFCMPTTLVDNLITGWPFDNATCKMSGLVQGMSVSASVFTLVAIAVERFRCIVHPFREKLTLRKALVTIAVIWALALLIMCPSAVTLTVTREEHHFMVDARNRSYPLYSCWEAWPEKGMRRVYTTVLFSHIYLAPLALIVVMYARIARKLCQAPGPAPGGEEAADPRASRRRARVVHMLVMVALFFTLSWLPLWALLLLIDYGQLSAPQLHLVTVYAFPFAHWLAFFNSSANPIIYGYFNENFRRGFQAAFRARLCPRPSGSHKEAYSERPGGLLHRRVFVVVRPSDSGLPSESGPSSGAPRPGRLPLRNGRVAHHGLPREGPGCSHLPLTIPAWDI</sequence>
<gene>
    <name evidence="7" type="primary">NPFFR1</name>
    <name type="synonym">GPR147</name>
    <name type="synonym">NPFF1</name>
</gene>
<name>NPFF1_HUMAN</name>
<protein>
    <recommendedName>
        <fullName>Neuropeptide FF receptor 1</fullName>
    </recommendedName>
    <alternativeName>
        <fullName>G-protein coupled receptor 147</fullName>
    </alternativeName>
    <alternativeName>
        <fullName>RFamide-related peptide receptor OT7T022</fullName>
    </alternativeName>
</protein>
<evidence type="ECO:0000255" key="1"/>
<evidence type="ECO:0000255" key="2">
    <source>
        <dbReference type="PROSITE-ProRule" id="PRU00521"/>
    </source>
</evidence>
<evidence type="ECO:0000256" key="3">
    <source>
        <dbReference type="SAM" id="MobiDB-lite"/>
    </source>
</evidence>
<evidence type="ECO:0000269" key="4">
    <source>
    </source>
</evidence>
<evidence type="ECO:0000269" key="5">
    <source>
    </source>
</evidence>
<evidence type="ECO:0000305" key="6"/>
<evidence type="ECO:0000312" key="7">
    <source>
        <dbReference type="HGNC" id="HGNC:17425"/>
    </source>
</evidence>
<organism>
    <name type="scientific">Homo sapiens</name>
    <name type="common">Human</name>
    <dbReference type="NCBI Taxonomy" id="9606"/>
    <lineage>
        <taxon>Eukaryota</taxon>
        <taxon>Metazoa</taxon>
        <taxon>Chordata</taxon>
        <taxon>Craniata</taxon>
        <taxon>Vertebrata</taxon>
        <taxon>Euteleostomi</taxon>
        <taxon>Mammalia</taxon>
        <taxon>Eutheria</taxon>
        <taxon>Euarchontoglires</taxon>
        <taxon>Primates</taxon>
        <taxon>Haplorrhini</taxon>
        <taxon>Catarrhini</taxon>
        <taxon>Hominidae</taxon>
        <taxon>Homo</taxon>
    </lineage>
</organism>
<proteinExistence type="evidence at protein level"/>